<comment type="function">
    <text evidence="4 5 6 7 8 9 10 13">Acts as a component of the auxin efflux carrier (PubMed:35768502). Component of the intracellular auxin-transport pathway in the male gametophyte (PubMed:20439545, PubMed:22540348). Involved in the regulation of auxin homeostasis in pollen (PubMed:22540348). Involved in the efflux of auxin from the endoplasmic reticulum into the cytoplasm (PubMed:22760640). Binds auxins including indole-3-acetic acid (IAA), naphthaleneacetic acid (NAA) and the herbicide 2,4-dichlorophenoxyacetic acid (2,4-D), but barely indole-3-butyric acid (IBA) and 2-phenylacetic acid (PAA) (PubMed:35768502). PIN5 and PIN8 may have an antagonistic/compensatory activity (PubMed:22760640, PubMed:22990451). Involved in the control of vein patterning (PubMed:23437008, PubMed:24304505). Redundantly with PIN6, inhibits the vein-formation-promoting functions of PIN5 (PubMed:26560462). PIN5, PIN6, and PIN8 control vein network geometry, but they are expressed in mutually exclusive domains of leaf vascular cells (PubMed:26560462).</text>
</comment>
<comment type="activity regulation">
    <text evidence="10">Auxin efflux carrier activity is competitively inhibited by naptalamate (N-1-naphthylphthalamic acid, NPA).</text>
</comment>
<comment type="biophysicochemical properties">
    <kinetics>
        <KM evidence="10">356 uM for indole-3-acetic acid</KM>
    </kinetics>
    <phDependence>
        <text evidence="10">Optimum pH is 6-7.4.</text>
    </phDependence>
</comment>
<comment type="subunit">
    <text evidence="10">Homodimer.</text>
</comment>
<comment type="subcellular location">
    <subcellularLocation>
        <location evidence="3 4 5 6 7">Endoplasmic reticulum membrane</location>
        <topology evidence="12">Multi-pass membrane protein</topology>
    </subcellularLocation>
    <subcellularLocation>
        <location evidence="4">Cell membrane</location>
        <topology evidence="12">Multi-pass membrane protein</topology>
    </subcellularLocation>
    <text evidence="5 6">Localizes to endoplasmic reticulum in pollen, growing pollen tubes and leaves.</text>
</comment>
<comment type="tissue specificity">
    <text evidence="5 6 9">Expressed in veins of mature leaves (PubMed:26560462). Strongly expressed in pollen (PubMed:22540348, PubMed:22760640).</text>
</comment>
<comment type="developmental stage">
    <text evidence="5 7">Expressed at later stages of microgametogenesis, after the pollen has reached the tricellular stage and until pollen dehiscence (PubMed:22540348). Expressed during vein formation (PubMed:23437008).</text>
</comment>
<comment type="disruption phenotype">
    <text evidence="5 6">No visible phenotype (PubMed:22540348, PubMed:22760640). Increased frequency of aborted and misshaped pollen grains and decreased pollen germination (PubMed:22760640).</text>
</comment>
<comment type="similarity">
    <text evidence="12">Belongs to the auxin efflux carrier (TC 2.A.69.1) family.</text>
</comment>
<dbReference type="EMBL" id="AL391146">
    <property type="protein sequence ID" value="CAC01829.1"/>
    <property type="molecule type" value="Genomic_DNA"/>
</dbReference>
<dbReference type="EMBL" id="CP002688">
    <property type="protein sequence ID" value="AED92117.1"/>
    <property type="molecule type" value="Genomic_DNA"/>
</dbReference>
<dbReference type="PIR" id="T51455">
    <property type="entry name" value="T51455"/>
</dbReference>
<dbReference type="RefSeq" id="NP_197014.1">
    <property type="nucleotide sequence ID" value="NM_121514.2"/>
</dbReference>
<dbReference type="PDB" id="7QP9">
    <property type="method" value="EM"/>
    <property type="resolution" value="2.89 A"/>
    <property type="chains" value="A/B=2-367"/>
</dbReference>
<dbReference type="PDB" id="7QPA">
    <property type="method" value="EM"/>
    <property type="resolution" value="3.18 A"/>
    <property type="chains" value="A/B=2-367"/>
</dbReference>
<dbReference type="PDB" id="7QPC">
    <property type="method" value="EM"/>
    <property type="resolution" value="3.44 A"/>
    <property type="chains" value="A/B=2-367"/>
</dbReference>
<dbReference type="PDBsum" id="7QP9"/>
<dbReference type="PDBsum" id="7QPA"/>
<dbReference type="PDBsum" id="7QPC"/>
<dbReference type="EMDB" id="EMD-14115"/>
<dbReference type="EMDB" id="EMD-14116"/>
<dbReference type="EMDB" id="EMD-14117"/>
<dbReference type="EMDB" id="EMD-14118"/>
<dbReference type="SMR" id="Q9LFP6"/>
<dbReference type="STRING" id="3702.Q9LFP6"/>
<dbReference type="TCDB" id="2.A.69.1.7">
    <property type="family name" value="the auxin efflux carrier (aec) family"/>
</dbReference>
<dbReference type="PaxDb" id="3702-AT5G15100.1"/>
<dbReference type="ProteomicsDB" id="236756"/>
<dbReference type="EnsemblPlants" id="AT5G15100.1">
    <property type="protein sequence ID" value="AT5G15100.1"/>
    <property type="gene ID" value="AT5G15100"/>
</dbReference>
<dbReference type="GeneID" id="831362"/>
<dbReference type="Gramene" id="AT5G15100.1">
    <property type="protein sequence ID" value="AT5G15100.1"/>
    <property type="gene ID" value="AT5G15100"/>
</dbReference>
<dbReference type="KEGG" id="ath:AT5G15100"/>
<dbReference type="Araport" id="AT5G15100"/>
<dbReference type="TAIR" id="AT5G15100">
    <property type="gene designation" value="PIN8"/>
</dbReference>
<dbReference type="eggNOG" id="ENOG502QS5F">
    <property type="taxonomic scope" value="Eukaryota"/>
</dbReference>
<dbReference type="HOGENOM" id="CLU_019285_0_0_1"/>
<dbReference type="InParanoid" id="Q9LFP6"/>
<dbReference type="OMA" id="FIWSSIH"/>
<dbReference type="PhylomeDB" id="Q9LFP6"/>
<dbReference type="PRO" id="PR:Q9LFP6"/>
<dbReference type="Proteomes" id="UP000006548">
    <property type="component" value="Chromosome 5"/>
</dbReference>
<dbReference type="ExpressionAtlas" id="Q9LFP6">
    <property type="expression patterns" value="baseline and differential"/>
</dbReference>
<dbReference type="GO" id="GO:0071944">
    <property type="term" value="C:cell periphery"/>
    <property type="evidence" value="ECO:0000250"/>
    <property type="project" value="UniProtKB"/>
</dbReference>
<dbReference type="GO" id="GO:0005783">
    <property type="term" value="C:endoplasmic reticulum"/>
    <property type="evidence" value="ECO:0000314"/>
    <property type="project" value="TAIR"/>
</dbReference>
<dbReference type="GO" id="GO:0005789">
    <property type="term" value="C:endoplasmic reticulum membrane"/>
    <property type="evidence" value="ECO:0007669"/>
    <property type="project" value="UniProtKB-SubCell"/>
</dbReference>
<dbReference type="GO" id="GO:0005886">
    <property type="term" value="C:plasma membrane"/>
    <property type="evidence" value="ECO:0000250"/>
    <property type="project" value="UniProtKB"/>
</dbReference>
<dbReference type="GO" id="GO:0010329">
    <property type="term" value="F:auxin efflux transmembrane transporter activity"/>
    <property type="evidence" value="ECO:0000250"/>
    <property type="project" value="UniProtKB"/>
</dbReference>
<dbReference type="GO" id="GO:0042802">
    <property type="term" value="F:identical protein binding"/>
    <property type="evidence" value="ECO:0000314"/>
    <property type="project" value="UniProtKB"/>
</dbReference>
<dbReference type="GO" id="GO:0042803">
    <property type="term" value="F:protein homodimerization activity"/>
    <property type="evidence" value="ECO:0000314"/>
    <property type="project" value="UniProtKB"/>
</dbReference>
<dbReference type="GO" id="GO:0010315">
    <property type="term" value="P:auxin export across the plasma membrane"/>
    <property type="evidence" value="ECO:0000315"/>
    <property type="project" value="TAIR"/>
</dbReference>
<dbReference type="GO" id="GO:0009734">
    <property type="term" value="P:auxin-activated signaling pathway"/>
    <property type="evidence" value="ECO:0007669"/>
    <property type="project" value="UniProtKB-KW"/>
</dbReference>
<dbReference type="GO" id="GO:0009555">
    <property type="term" value="P:pollen development"/>
    <property type="evidence" value="ECO:0000315"/>
    <property type="project" value="TAIR"/>
</dbReference>
<dbReference type="InterPro" id="IPR014024">
    <property type="entry name" value="Auxin_eff_plant"/>
</dbReference>
<dbReference type="InterPro" id="IPR051107">
    <property type="entry name" value="Auxin_Efflux_Carrier"/>
</dbReference>
<dbReference type="InterPro" id="IPR004776">
    <property type="entry name" value="Mem_transp_PIN-like"/>
</dbReference>
<dbReference type="NCBIfam" id="TIGR00946">
    <property type="entry name" value="2a69"/>
    <property type="match status" value="1"/>
</dbReference>
<dbReference type="PANTHER" id="PTHR31752">
    <property type="entry name" value="AUXIN EFFLUX CARRIER COMPONENT 1B-RELATED"/>
    <property type="match status" value="1"/>
</dbReference>
<dbReference type="PANTHER" id="PTHR31752:SF40">
    <property type="entry name" value="AUXIN EFFLUX CARRIER COMPONENT 8"/>
    <property type="match status" value="1"/>
</dbReference>
<dbReference type="Pfam" id="PF03547">
    <property type="entry name" value="Mem_trans"/>
    <property type="match status" value="1"/>
</dbReference>
<sequence>MISWLDIYHVVSATVPLYVSMTLGFLSARHLKLFSPEQCAGINKFVAKFSIPLLSFQIISENNPFKMSPKLILSDILQKFLVVVVLAMVLRFWHPTGGRGGKLGWVITGLSISVLPNTLILGMPILSAIYGDEAASILEQIVVLQSLIWYTILLFLFELNAARALPSSGASLEHTGNDQEEANIEDEPKEEEDEEEVAIVRTRSVGTMKILLKAWRKLIINPNTYATLIGIIWATLHFRLGWNLPEMIDKSIHLLSDGGLGMAMFSLGLFMASQSSIIACGTKMAIITMLLKFVLGPALMIASAYCIRLKSTLFKVAILQAALPQGVVPFVFAKEYNLHPEIISTGVIFGMLIALPTTLAYYFLLDL</sequence>
<evidence type="ECO:0000255" key="1"/>
<evidence type="ECO:0000256" key="2">
    <source>
        <dbReference type="SAM" id="MobiDB-lite"/>
    </source>
</evidence>
<evidence type="ECO:0000269" key="3">
    <source>
    </source>
</evidence>
<evidence type="ECO:0000269" key="4">
    <source>
    </source>
</evidence>
<evidence type="ECO:0000269" key="5">
    <source>
    </source>
</evidence>
<evidence type="ECO:0000269" key="6">
    <source>
    </source>
</evidence>
<evidence type="ECO:0000269" key="7">
    <source>
    </source>
</evidence>
<evidence type="ECO:0000269" key="8">
    <source>
    </source>
</evidence>
<evidence type="ECO:0000269" key="9">
    <source>
    </source>
</evidence>
<evidence type="ECO:0000269" key="10">
    <source>
    </source>
</evidence>
<evidence type="ECO:0000303" key="11">
    <source>
    </source>
</evidence>
<evidence type="ECO:0000305" key="12"/>
<evidence type="ECO:0000305" key="13">
    <source>
    </source>
</evidence>
<evidence type="ECO:0000312" key="14">
    <source>
        <dbReference type="Araport" id="AT5G15100"/>
    </source>
</evidence>
<evidence type="ECO:0000312" key="15">
    <source>
        <dbReference type="EMBL" id="CAC01829.1"/>
    </source>
</evidence>
<evidence type="ECO:0007744" key="16">
    <source>
        <dbReference type="PDB" id="7QP9"/>
    </source>
</evidence>
<evidence type="ECO:0007744" key="17">
    <source>
        <dbReference type="PDB" id="7QPA"/>
    </source>
</evidence>
<evidence type="ECO:0007744" key="18">
    <source>
        <dbReference type="PDB" id="7QPC"/>
    </source>
</evidence>
<evidence type="ECO:0007829" key="19">
    <source>
        <dbReference type="PDB" id="7QP9"/>
    </source>
</evidence>
<evidence type="ECO:0007829" key="20">
    <source>
        <dbReference type="PDB" id="7QPA"/>
    </source>
</evidence>
<organism>
    <name type="scientific">Arabidopsis thaliana</name>
    <name type="common">Mouse-ear cress</name>
    <dbReference type="NCBI Taxonomy" id="3702"/>
    <lineage>
        <taxon>Eukaryota</taxon>
        <taxon>Viridiplantae</taxon>
        <taxon>Streptophyta</taxon>
        <taxon>Embryophyta</taxon>
        <taxon>Tracheophyta</taxon>
        <taxon>Spermatophyta</taxon>
        <taxon>Magnoliopsida</taxon>
        <taxon>eudicotyledons</taxon>
        <taxon>Gunneridae</taxon>
        <taxon>Pentapetalae</taxon>
        <taxon>rosids</taxon>
        <taxon>malvids</taxon>
        <taxon>Brassicales</taxon>
        <taxon>Brassicaceae</taxon>
        <taxon>Camelineae</taxon>
        <taxon>Arabidopsis</taxon>
    </lineage>
</organism>
<accession>Q9LFP6</accession>
<protein>
    <recommendedName>
        <fullName evidence="11">Auxin efflux carrier component 8</fullName>
        <shortName evidence="11">AtPIN8</shortName>
    </recommendedName>
</protein>
<gene>
    <name evidence="11" type="primary">PIN8</name>
    <name type="synonym">PIN5</name>
    <name evidence="14" type="ordered locus">At5g15100</name>
    <name evidence="15" type="ORF">F2G14_220</name>
</gene>
<reference key="1">
    <citation type="journal article" date="2000" name="Nature">
        <title>Sequence and analysis of chromosome 5 of the plant Arabidopsis thaliana.</title>
        <authorList>
            <person name="Tabata S."/>
            <person name="Kaneko T."/>
            <person name="Nakamura Y."/>
            <person name="Kotani H."/>
            <person name="Kato T."/>
            <person name="Asamizu E."/>
            <person name="Miyajima N."/>
            <person name="Sasamoto S."/>
            <person name="Kimura T."/>
            <person name="Hosouchi T."/>
            <person name="Kawashima K."/>
            <person name="Kohara M."/>
            <person name="Matsumoto M."/>
            <person name="Matsuno A."/>
            <person name="Muraki A."/>
            <person name="Nakayama S."/>
            <person name="Nakazaki N."/>
            <person name="Naruo K."/>
            <person name="Okumura S."/>
            <person name="Shinpo S."/>
            <person name="Takeuchi C."/>
            <person name="Wada T."/>
            <person name="Watanabe A."/>
            <person name="Yamada M."/>
            <person name="Yasuda M."/>
            <person name="Sato S."/>
            <person name="de la Bastide M."/>
            <person name="Huang E."/>
            <person name="Spiegel L."/>
            <person name="Gnoj L."/>
            <person name="O'Shaughnessy A."/>
            <person name="Preston R."/>
            <person name="Habermann K."/>
            <person name="Murray J."/>
            <person name="Johnson D."/>
            <person name="Rohlfing T."/>
            <person name="Nelson J."/>
            <person name="Stoneking T."/>
            <person name="Pepin K."/>
            <person name="Spieth J."/>
            <person name="Sekhon M."/>
            <person name="Armstrong J."/>
            <person name="Becker M."/>
            <person name="Belter E."/>
            <person name="Cordum H."/>
            <person name="Cordes M."/>
            <person name="Courtney L."/>
            <person name="Courtney W."/>
            <person name="Dante M."/>
            <person name="Du H."/>
            <person name="Edwards J."/>
            <person name="Fryman J."/>
            <person name="Haakensen B."/>
            <person name="Lamar E."/>
            <person name="Latreille P."/>
            <person name="Leonard S."/>
            <person name="Meyer R."/>
            <person name="Mulvaney E."/>
            <person name="Ozersky P."/>
            <person name="Riley A."/>
            <person name="Strowmatt C."/>
            <person name="Wagner-McPherson C."/>
            <person name="Wollam A."/>
            <person name="Yoakum M."/>
            <person name="Bell M."/>
            <person name="Dedhia N."/>
            <person name="Parnell L."/>
            <person name="Shah R."/>
            <person name="Rodriguez M."/>
            <person name="Hoon See L."/>
            <person name="Vil D."/>
            <person name="Baker J."/>
            <person name="Kirchoff K."/>
            <person name="Toth K."/>
            <person name="King L."/>
            <person name="Bahret A."/>
            <person name="Miller B."/>
            <person name="Marra M.A."/>
            <person name="Martienssen R."/>
            <person name="McCombie W.R."/>
            <person name="Wilson R.K."/>
            <person name="Murphy G."/>
            <person name="Bancroft I."/>
            <person name="Volckaert G."/>
            <person name="Wambutt R."/>
            <person name="Duesterhoeft A."/>
            <person name="Stiekema W."/>
            <person name="Pohl T."/>
            <person name="Entian K.-D."/>
            <person name="Terryn N."/>
            <person name="Hartley N."/>
            <person name="Bent E."/>
            <person name="Johnson S."/>
            <person name="Langham S.-A."/>
            <person name="McCullagh B."/>
            <person name="Robben J."/>
            <person name="Grymonprez B."/>
            <person name="Zimmermann W."/>
            <person name="Ramsperger U."/>
            <person name="Wedler H."/>
            <person name="Balke K."/>
            <person name="Wedler E."/>
            <person name="Peters S."/>
            <person name="van Staveren M."/>
            <person name="Dirkse W."/>
            <person name="Mooijman P."/>
            <person name="Klein Lankhorst R."/>
            <person name="Weitzenegger T."/>
            <person name="Bothe G."/>
            <person name="Rose M."/>
            <person name="Hauf J."/>
            <person name="Berneiser S."/>
            <person name="Hempel S."/>
            <person name="Feldpausch M."/>
            <person name="Lamberth S."/>
            <person name="Villarroel R."/>
            <person name="Gielen J."/>
            <person name="Ardiles W."/>
            <person name="Bents O."/>
            <person name="Lemcke K."/>
            <person name="Kolesov G."/>
            <person name="Mayer K.F.X."/>
            <person name="Rudd S."/>
            <person name="Schoof H."/>
            <person name="Schueller C."/>
            <person name="Zaccaria P."/>
            <person name="Mewes H.-W."/>
            <person name="Bevan M."/>
            <person name="Fransz P.F."/>
        </authorList>
    </citation>
    <scope>NUCLEOTIDE SEQUENCE [LARGE SCALE GENOMIC DNA]</scope>
    <source>
        <strain>cv. Columbia</strain>
    </source>
</reference>
<reference key="2">
    <citation type="journal article" date="2017" name="Plant J.">
        <title>Araport11: a complete reannotation of the Arabidopsis thaliana reference genome.</title>
        <authorList>
            <person name="Cheng C.Y."/>
            <person name="Krishnakumar V."/>
            <person name="Chan A.P."/>
            <person name="Thibaud-Nissen F."/>
            <person name="Schobel S."/>
            <person name="Town C.D."/>
        </authorList>
    </citation>
    <scope>GENOME REANNOTATION</scope>
    <source>
        <strain>cv. Columbia</strain>
    </source>
</reference>
<reference key="3">
    <citation type="journal article" date="2005" name="Trends Plant Sci.">
        <title>The PIN auxin efflux facilitators: evolutionary and functional perspectives.</title>
        <authorList>
            <person name="Paponov I.A."/>
            <person name="Teale W.D."/>
            <person name="Trebar M."/>
            <person name="Blilou I."/>
            <person name="Palme K."/>
        </authorList>
    </citation>
    <scope>GENE FAMILY</scope>
    <scope>NOMENCLATURE</scope>
</reference>
<reference key="4">
    <citation type="journal article" date="2009" name="Nature">
        <title>Subcellular homeostasis of phytohormone auxin is mediated by the ER-localized PIN5 transporter.</title>
        <authorList>
            <person name="Mravec J."/>
            <person name="Skupa P."/>
            <person name="Bailly A."/>
            <person name="Hoyerova K."/>
            <person name="Krecek P."/>
            <person name="Bielach A."/>
            <person name="Petrasek J."/>
            <person name="Zhang J."/>
            <person name="Gaykova V."/>
            <person name="Stierhof Y.D."/>
            <person name="Dobrev P.I."/>
            <person name="Schwarzerova K."/>
            <person name="Rolcik J."/>
            <person name="Seifertova D."/>
            <person name="Luschnig C."/>
            <person name="Benkova E."/>
            <person name="Zazimalova E."/>
            <person name="Geisler M."/>
            <person name="Friml J."/>
        </authorList>
    </citation>
    <scope>SUBCELLULAR LOCATION</scope>
</reference>
<reference key="5">
    <citation type="journal article" date="2010" name="Plant Physiol.">
        <title>Differential auxin-transporting activities of PIN-FORMED proteins in Arabidopsis root hair cells.</title>
        <authorList>
            <person name="Ganguly A."/>
            <person name="Lee S.H."/>
            <person name="Cho M."/>
            <person name="Lee O.R."/>
            <person name="Yoo H."/>
            <person name="Cho H.T."/>
        </authorList>
    </citation>
    <scope>SUBCELLULAR LOCATION</scope>
    <scope>FUNCTION</scope>
</reference>
<reference key="6">
    <citation type="journal article" date="2012" name="Nat. Commun.">
        <title>ER-localized auxin transporter PIN8 regulates auxin homeostasis and male gametophyte development in Arabidopsis.</title>
        <authorList>
            <person name="Ding Z."/>
            <person name="Wang B."/>
            <person name="Moreno I."/>
            <person name="Duplakova N."/>
            <person name="Simon S."/>
            <person name="Carraro N."/>
            <person name="Reemmer J."/>
            <person name="Pencik A."/>
            <person name="Chen X."/>
            <person name="Tejos R."/>
            <person name="Skupa P."/>
            <person name="Pollmann S."/>
            <person name="Mravec J."/>
            <person name="Petrasek J."/>
            <person name="Zazimalova E."/>
            <person name="Honys D."/>
            <person name="Rolcik J."/>
            <person name="Murphy A."/>
            <person name="Orellana A."/>
            <person name="Geisler M."/>
            <person name="Friml J."/>
        </authorList>
    </citation>
    <scope>FUNCTION</scope>
    <scope>TISSUE SPECIFICITY</scope>
    <scope>DISRUPTION PHENOTYPE</scope>
    <scope>SUBCELLULAR LOCATION</scope>
</reference>
<reference key="7">
    <citation type="journal article" date="2012" name="Plant J.">
        <title>The endoplasmic reticulum localized PIN8 is a pollen-specific auxin carrier involved in intracellular auxin homeostasis.</title>
        <authorList>
            <person name="Dal Bosco C."/>
            <person name="Dovzhenko A."/>
            <person name="Liu X."/>
            <person name="Woerner N."/>
            <person name="Rensch T."/>
            <person name="Eismann M."/>
            <person name="Eimer S."/>
            <person name="Hegermann J."/>
            <person name="Paponov I.A."/>
            <person name="Ruperti B."/>
            <person name="Heberle-Bors E."/>
            <person name="Touraev A."/>
            <person name="Cohen J.D."/>
            <person name="Palme K."/>
        </authorList>
    </citation>
    <scope>FUNCTION</scope>
    <scope>TISSUE SPECIFICITY</scope>
    <scope>DEVELOPMENTAL STAGE</scope>
    <scope>SUBCELLULAR LOCATION</scope>
    <scope>DISRUPTION PHENOTYPE</scope>
</reference>
<reference key="8">
    <citation type="journal article" date="2012" name="Plant Signal. Behav.">
        <title>Intracellular auxin transport in pollen: PIN8, PIN5 and PILS5.</title>
        <authorList>
            <person name="Dal Bosco C."/>
            <person name="Dovzhenko A."/>
            <person name="Palme K."/>
        </authorList>
    </citation>
    <scope>FUNCTION</scope>
</reference>
<reference key="9">
    <citation type="journal article" date="2013" name="PLoS Genet.">
        <title>Patterning of leaf vein networks by convergent auxin transport pathways.</title>
        <authorList>
            <person name="Sawchuk M.G."/>
            <person name="Edgar A."/>
            <person name="Scarpella E."/>
        </authorList>
    </citation>
    <scope>FUNCTION</scope>
    <scope>DEVELOPMENTAL STAGE</scope>
    <scope>SUBCELLULAR LOCATION</scope>
</reference>
<reference key="10">
    <citation type="journal article" date="2013" name="Plant Signal. Behav.">
        <title>Control of vein patterning by intracellular auxin transport.</title>
        <authorList>
            <person name="Sawchuk M.G."/>
            <person name="Scarpella E."/>
        </authorList>
    </citation>
    <scope>FUNCTION</scope>
</reference>
<reference key="11">
    <citation type="journal article" date="2015" name="BMC Biol.">
        <title>Control of vein network topology by auxin transport.</title>
        <authorList>
            <person name="Verna C."/>
            <person name="Sawchuk M.G."/>
            <person name="Linh N.M."/>
            <person name="Scarpella E."/>
        </authorList>
    </citation>
    <scope>TISSUE SPECIFICITY</scope>
    <scope>FUNCTION</scope>
</reference>
<reference evidence="16 17 18" key="12">
    <citation type="journal article" date="2022" name="Nature">
        <title>Structures and mechanism of the plant PIN-FORMED auxin transporter.</title>
        <authorList>
            <person name="Ung K.L."/>
            <person name="Winkler M."/>
            <person name="Schulz L."/>
            <person name="Kolb M."/>
            <person name="Janacek D.P."/>
            <person name="Dedic E."/>
            <person name="Stokes D.L."/>
            <person name="Hammes U.Z."/>
            <person name="Pedersen B.P."/>
        </authorList>
    </citation>
    <scope>STRUCTURE BY ELECTRON MICROSCOPY (2.89 ANGSTROMS) OF 2-367 IN COMPLEX WITH AUXIN AND AUXIN TRANSPORT INHIBITOR</scope>
    <scope>FUNCTION</scope>
    <scope>MUTAGENESIS OF ILE-51; ASP-75; GLN-78; LYS-79; ASN-117; ILE-120; GLN-145; SER-146; TYR-150; THR-288; GLN-320 AND VAL-328</scope>
    <scope>HOMODIMERIZATION</scope>
    <scope>BIOPHYSICOCHEMICAL PROPERTIES</scope>
    <scope>ACTIVITY REGULATION</scope>
</reference>
<keyword id="KW-0002">3D-structure</keyword>
<keyword id="KW-0927">Auxin signaling pathway</keyword>
<keyword id="KW-1003">Cell membrane</keyword>
<keyword id="KW-0256">Endoplasmic reticulum</keyword>
<keyword id="KW-0472">Membrane</keyword>
<keyword id="KW-1185">Reference proteome</keyword>
<keyword id="KW-0812">Transmembrane</keyword>
<keyword id="KW-1133">Transmembrane helix</keyword>
<keyword id="KW-0813">Transport</keyword>
<proteinExistence type="evidence at protein level"/>
<feature type="chain" id="PRO_0000123784" description="Auxin efflux carrier component 8">
    <location>
        <begin position="1"/>
        <end position="367"/>
    </location>
</feature>
<feature type="topological domain" description="Extracellular" evidence="12">
    <location>
        <begin position="1"/>
        <end position="6"/>
    </location>
</feature>
<feature type="transmembrane region" description="Helical; Name=1" evidence="1">
    <location>
        <begin position="7"/>
        <end position="27"/>
    </location>
</feature>
<feature type="topological domain" description="Cytoplasmic" evidence="12">
    <location>
        <begin position="28"/>
        <end position="38"/>
    </location>
</feature>
<feature type="transmembrane region" description="Helical; Name=2" evidence="1">
    <location>
        <begin position="39"/>
        <end position="59"/>
    </location>
</feature>
<feature type="topological domain" description="Extracellular" evidence="12">
    <location>
        <begin position="60"/>
        <end position="69"/>
    </location>
</feature>
<feature type="transmembrane region" description="Helical; Name=3" evidence="1">
    <location>
        <begin position="70"/>
        <end position="90"/>
    </location>
</feature>
<feature type="topological domain" description="Cytoplasmic" evidence="12">
    <location>
        <begin position="91"/>
        <end position="105"/>
    </location>
</feature>
<feature type="transmembrane region" description="Helical; Name=4" evidence="1">
    <location>
        <begin position="106"/>
        <end position="126"/>
    </location>
</feature>
<feature type="topological domain" description="Extracellular" evidence="12">
    <location>
        <begin position="127"/>
        <end position="136"/>
    </location>
</feature>
<feature type="transmembrane region" description="Helical; Name=5" evidence="1">
    <location>
        <begin position="137"/>
        <end position="157"/>
    </location>
</feature>
<feature type="topological domain" description="Cytoplasmic" evidence="12">
    <location>
        <begin position="158"/>
        <end position="227"/>
    </location>
</feature>
<feature type="transmembrane region" description="Helical; Name=6" evidence="1">
    <location>
        <begin position="228"/>
        <end position="248"/>
    </location>
</feature>
<feature type="topological domain" description="Extracellular" evidence="12">
    <location>
        <begin position="249"/>
        <end position="251"/>
    </location>
</feature>
<feature type="transmembrane region" description="Helical; Name=7" evidence="1">
    <location>
        <begin position="252"/>
        <end position="272"/>
    </location>
</feature>
<feature type="topological domain" description="Cytoplasmic" evidence="12">
    <location>
        <begin position="273"/>
        <end position="288"/>
    </location>
</feature>
<feature type="transmembrane region" description="Helical; Name=8" evidence="1">
    <location>
        <begin position="289"/>
        <end position="309"/>
    </location>
</feature>
<feature type="topological domain" description="Extracellular" evidence="12">
    <location>
        <begin position="310"/>
        <end position="312"/>
    </location>
</feature>
<feature type="transmembrane region" description="Helical; Name=9" evidence="1">
    <location>
        <begin position="313"/>
        <end position="333"/>
    </location>
</feature>
<feature type="topological domain" description="Cytoplasmic" evidence="12">
    <location>
        <begin position="334"/>
        <end position="344"/>
    </location>
</feature>
<feature type="transmembrane region" description="Helical; Name=10" evidence="1">
    <location>
        <begin position="345"/>
        <end position="365"/>
    </location>
</feature>
<feature type="topological domain" description="Extracellular" evidence="12">
    <location>
        <begin position="366"/>
        <end position="367"/>
    </location>
</feature>
<feature type="region of interest" description="Disordered" evidence="2">
    <location>
        <begin position="168"/>
        <end position="194"/>
    </location>
</feature>
<feature type="compositionally biased region" description="Acidic residues" evidence="2">
    <location>
        <begin position="178"/>
        <end position="194"/>
    </location>
</feature>
<feature type="binding site" evidence="10 17">
    <location>
        <position position="51"/>
    </location>
    <ligand>
        <name>(indol-3-yl)acetate</name>
        <dbReference type="ChEBI" id="CHEBI:30854"/>
    </ligand>
</feature>
<feature type="binding site" evidence="10 17">
    <location>
        <position position="117"/>
    </location>
    <ligand>
        <name>(indol-3-yl)acetate</name>
        <dbReference type="ChEBI" id="CHEBI:30854"/>
    </ligand>
</feature>
<feature type="binding site" evidence="10 17">
    <location>
        <position position="119"/>
    </location>
    <ligand>
        <name>(indol-3-yl)acetate</name>
        <dbReference type="ChEBI" id="CHEBI:30854"/>
    </ligand>
</feature>
<feature type="binding site" evidence="10 17">
    <location>
        <position position="150"/>
    </location>
    <ligand>
        <name>(indol-3-yl)acetate</name>
        <dbReference type="ChEBI" id="CHEBI:30854"/>
    </ligand>
</feature>
<feature type="binding site" evidence="10 17">
    <location>
        <position position="327"/>
    </location>
    <ligand>
        <name>(indol-3-yl)acetate</name>
        <dbReference type="ChEBI" id="CHEBI:30854"/>
    </ligand>
</feature>
<feature type="binding site" evidence="10 17">
    <location>
        <position position="328"/>
    </location>
    <ligand>
        <name>(indol-3-yl)acetate</name>
        <dbReference type="ChEBI" id="CHEBI:30854"/>
    </ligand>
</feature>
<feature type="mutagenesis site" description="Strongly reduced auxin (IAA) transport activity." evidence="10">
    <original>I</original>
    <variation>Y</variation>
    <location>
        <position position="51"/>
    </location>
</feature>
<feature type="mutagenesis site" description="Abolished auxin (IAA) transport activity." evidence="10">
    <original>D</original>
    <variation>A</variation>
    <variation>N</variation>
    <location>
        <position position="75"/>
    </location>
</feature>
<feature type="mutagenesis site" description="Abolished auxin (IAA) transport activity." evidence="10">
    <original>Q</original>
    <variation>A</variation>
    <location>
        <position position="78"/>
    </location>
</feature>
<feature type="mutagenesis site" description="Abolished auxin (IAA) transport activity." evidence="10">
    <original>K</original>
    <variation>A</variation>
    <variation>Q</variation>
    <location>
        <position position="79"/>
    </location>
</feature>
<feature type="mutagenesis site" description="Abolished auxin (IAA) transport activity." evidence="10">
    <original>N</original>
    <variation>A</variation>
    <location>
        <position position="117"/>
    </location>
</feature>
<feature type="mutagenesis site" description="Strongly reduced auxin (IAA) transport activity." evidence="10">
    <original>I</original>
    <variation>Y</variation>
    <location>
        <position position="120"/>
    </location>
</feature>
<feature type="mutagenesis site" description="Abolished auxin (IAA) transport activity." evidence="10">
    <original>Q</original>
    <variation>A</variation>
    <location>
        <position position="145"/>
    </location>
</feature>
<feature type="mutagenesis site" description="Normal auxin (IAA) transport activity." evidence="10">
    <original>S</original>
    <variation>A</variation>
    <location>
        <position position="146"/>
    </location>
</feature>
<feature type="mutagenesis site" description="Strongly reduced auxin (IAA) transport activity." evidence="10">
    <original>Y</original>
    <variation>A</variation>
    <location>
        <position position="150"/>
    </location>
</feature>
<feature type="mutagenesis site" description="Reduced auxin (IAA) transport activity." evidence="10">
    <original>Y</original>
    <variation>F</variation>
    <location>
        <position position="150"/>
    </location>
</feature>
<feature type="mutagenesis site" description="Enhanced auxin (IAA) transport activity." evidence="10">
    <original>T</original>
    <variation>A</variation>
    <location>
        <position position="288"/>
    </location>
</feature>
<feature type="mutagenesis site" description="Enhanced auxin (IAA) transport activity." evidence="10">
    <original>Q</original>
    <variation>A</variation>
    <location>
        <position position="320"/>
    </location>
</feature>
<feature type="mutagenesis site" description="Strongly reduced auxin (IAA) transport activity." evidence="10">
    <original>V</original>
    <variation>Y</variation>
    <location>
        <position position="328"/>
    </location>
</feature>
<feature type="helix" evidence="19">
    <location>
        <begin position="6"/>
        <end position="29"/>
    </location>
</feature>
<feature type="helix" evidence="19">
    <location>
        <begin position="36"/>
        <end position="48"/>
    </location>
</feature>
<feature type="helix" evidence="19">
    <location>
        <begin position="50"/>
        <end position="60"/>
    </location>
</feature>
<feature type="helix" evidence="19">
    <location>
        <begin position="64"/>
        <end position="66"/>
    </location>
</feature>
<feature type="helix" evidence="19">
    <location>
        <begin position="69"/>
        <end position="90"/>
    </location>
</feature>
<feature type="strand" evidence="19">
    <location>
        <begin position="95"/>
        <end position="98"/>
    </location>
</feature>
<feature type="helix" evidence="19">
    <location>
        <begin position="102"/>
        <end position="113"/>
    </location>
</feature>
<feature type="turn" evidence="20">
    <location>
        <begin position="119"/>
        <end position="121"/>
    </location>
</feature>
<feature type="helix" evidence="19">
    <location>
        <begin position="122"/>
        <end position="129"/>
    </location>
</feature>
<feature type="helix" evidence="19">
    <location>
        <begin position="132"/>
        <end position="163"/>
    </location>
</feature>
<feature type="helix" evidence="19">
    <location>
        <begin position="207"/>
        <end position="218"/>
    </location>
</feature>
<feature type="helix" evidence="19">
    <location>
        <begin position="222"/>
        <end position="240"/>
    </location>
</feature>
<feature type="helix" evidence="19">
    <location>
        <begin position="246"/>
        <end position="256"/>
    </location>
</feature>
<feature type="helix" evidence="19">
    <location>
        <begin position="259"/>
        <end position="272"/>
    </location>
</feature>
<feature type="strand" evidence="19">
    <location>
        <begin position="274"/>
        <end position="278"/>
    </location>
</feature>
<feature type="helix" evidence="19">
    <location>
        <begin position="282"/>
        <end position="293"/>
    </location>
</feature>
<feature type="helix" evidence="19">
    <location>
        <begin position="295"/>
        <end position="307"/>
    </location>
</feature>
<feature type="helix" evidence="19">
    <location>
        <begin position="311"/>
        <end position="320"/>
    </location>
</feature>
<feature type="helix" evidence="19">
    <location>
        <begin position="328"/>
        <end position="336"/>
    </location>
</feature>
<feature type="helix" evidence="19">
    <location>
        <begin position="340"/>
        <end position="366"/>
    </location>
</feature>
<name>PIN8_ARATH</name>